<name>COAE_RICFE</name>
<dbReference type="EC" id="2.7.1.24" evidence="1"/>
<dbReference type="EMBL" id="CP000053">
    <property type="protein sequence ID" value="AAY61028.1"/>
    <property type="molecule type" value="Genomic_DNA"/>
</dbReference>
<dbReference type="PDB" id="8DV0">
    <property type="method" value="X-ray"/>
    <property type="resolution" value="1.40 A"/>
    <property type="chains" value="A=1-191"/>
</dbReference>
<dbReference type="PDBsum" id="8DV0"/>
<dbReference type="SMR" id="Q4UN30"/>
<dbReference type="STRING" id="315456.RF_0177"/>
<dbReference type="KEGG" id="rfe:RF_0177"/>
<dbReference type="eggNOG" id="COG0237">
    <property type="taxonomic scope" value="Bacteria"/>
</dbReference>
<dbReference type="HOGENOM" id="CLU_057180_3_1_5"/>
<dbReference type="OrthoDB" id="9812943at2"/>
<dbReference type="UniPathway" id="UPA00241">
    <property type="reaction ID" value="UER00356"/>
</dbReference>
<dbReference type="Proteomes" id="UP000008548">
    <property type="component" value="Chromosome"/>
</dbReference>
<dbReference type="GO" id="GO:0005737">
    <property type="term" value="C:cytoplasm"/>
    <property type="evidence" value="ECO:0007669"/>
    <property type="project" value="UniProtKB-SubCell"/>
</dbReference>
<dbReference type="GO" id="GO:0005524">
    <property type="term" value="F:ATP binding"/>
    <property type="evidence" value="ECO:0007669"/>
    <property type="project" value="UniProtKB-UniRule"/>
</dbReference>
<dbReference type="GO" id="GO:0004140">
    <property type="term" value="F:dephospho-CoA kinase activity"/>
    <property type="evidence" value="ECO:0007669"/>
    <property type="project" value="UniProtKB-UniRule"/>
</dbReference>
<dbReference type="GO" id="GO:0015937">
    <property type="term" value="P:coenzyme A biosynthetic process"/>
    <property type="evidence" value="ECO:0007669"/>
    <property type="project" value="UniProtKB-UniRule"/>
</dbReference>
<dbReference type="CDD" id="cd02022">
    <property type="entry name" value="DPCK"/>
    <property type="match status" value="1"/>
</dbReference>
<dbReference type="Gene3D" id="3.40.50.300">
    <property type="entry name" value="P-loop containing nucleotide triphosphate hydrolases"/>
    <property type="match status" value="1"/>
</dbReference>
<dbReference type="HAMAP" id="MF_00376">
    <property type="entry name" value="Dephospho_CoA_kinase"/>
    <property type="match status" value="1"/>
</dbReference>
<dbReference type="InterPro" id="IPR001977">
    <property type="entry name" value="Depp_CoAkinase"/>
</dbReference>
<dbReference type="InterPro" id="IPR027417">
    <property type="entry name" value="P-loop_NTPase"/>
</dbReference>
<dbReference type="NCBIfam" id="TIGR00152">
    <property type="entry name" value="dephospho-CoA kinase"/>
    <property type="match status" value="1"/>
</dbReference>
<dbReference type="Pfam" id="PF01121">
    <property type="entry name" value="CoaE"/>
    <property type="match status" value="1"/>
</dbReference>
<dbReference type="SUPFAM" id="SSF52540">
    <property type="entry name" value="P-loop containing nucleoside triphosphate hydrolases"/>
    <property type="match status" value="1"/>
</dbReference>
<dbReference type="PROSITE" id="PS51219">
    <property type="entry name" value="DPCK"/>
    <property type="match status" value="1"/>
</dbReference>
<reference key="1">
    <citation type="journal article" date="2005" name="PLoS Biol.">
        <title>The genome sequence of Rickettsia felis identifies the first putative conjugative plasmid in an obligate intracellular parasite.</title>
        <authorList>
            <person name="Ogata H."/>
            <person name="Renesto P."/>
            <person name="Audic S."/>
            <person name="Robert C."/>
            <person name="Blanc G."/>
            <person name="Fournier P.-E."/>
            <person name="Parinello H."/>
            <person name="Claverie J.-M."/>
            <person name="Raoult D."/>
        </authorList>
    </citation>
    <scope>NUCLEOTIDE SEQUENCE [LARGE SCALE GENOMIC DNA]</scope>
    <source>
        <strain>ATCC VR-1525 / URRWXCal2</strain>
    </source>
</reference>
<gene>
    <name evidence="1" type="primary">coaE</name>
    <name type="ordered locus">RF_0177</name>
</gene>
<feature type="chain" id="PRO_0000243333" description="Dephospho-CoA kinase">
    <location>
        <begin position="1"/>
        <end position="191"/>
    </location>
</feature>
<feature type="domain" description="DPCK" evidence="1">
    <location>
        <begin position="3"/>
        <end position="191"/>
    </location>
</feature>
<feature type="binding site" evidence="1">
    <location>
        <begin position="11"/>
        <end position="16"/>
    </location>
    <ligand>
        <name>ATP</name>
        <dbReference type="ChEBI" id="CHEBI:30616"/>
    </ligand>
</feature>
<feature type="strand" evidence="2">
    <location>
        <begin position="2"/>
        <end position="8"/>
    </location>
</feature>
<feature type="helix" evidence="2">
    <location>
        <begin position="14"/>
        <end position="23"/>
    </location>
</feature>
<feature type="strand" evidence="2">
    <location>
        <begin position="28"/>
        <end position="30"/>
    </location>
</feature>
<feature type="helix" evidence="2">
    <location>
        <begin position="31"/>
        <end position="39"/>
    </location>
</feature>
<feature type="helix" evidence="2">
    <location>
        <begin position="42"/>
        <end position="51"/>
    </location>
</feature>
<feature type="helix" evidence="2">
    <location>
        <begin position="53"/>
        <end position="55"/>
    </location>
</feature>
<feature type="helix" evidence="2">
    <location>
        <begin position="60"/>
        <end position="69"/>
    </location>
</feature>
<feature type="helix" evidence="2">
    <location>
        <begin position="71"/>
        <end position="95"/>
    </location>
</feature>
<feature type="turn" evidence="2">
    <location>
        <begin position="96"/>
        <end position="98"/>
    </location>
</feature>
<feature type="strand" evidence="2">
    <location>
        <begin position="99"/>
        <end position="105"/>
    </location>
</feature>
<feature type="turn" evidence="2">
    <location>
        <begin position="111"/>
        <end position="116"/>
    </location>
</feature>
<feature type="strand" evidence="2">
    <location>
        <begin position="118"/>
        <end position="125"/>
    </location>
</feature>
<feature type="helix" evidence="2">
    <location>
        <begin position="128"/>
        <end position="137"/>
    </location>
</feature>
<feature type="helix" evidence="2">
    <location>
        <begin position="143"/>
        <end position="152"/>
    </location>
</feature>
<feature type="helix" evidence="2">
    <location>
        <begin position="156"/>
        <end position="161"/>
    </location>
</feature>
<feature type="strand" evidence="2">
    <location>
        <begin position="164"/>
        <end position="168"/>
    </location>
</feature>
<feature type="helix" evidence="2">
    <location>
        <begin position="173"/>
        <end position="190"/>
    </location>
</feature>
<accession>Q4UN30</accession>
<sequence>MLAIGITGSYASGKTFILDYLAEKGYKTFCADRCIKELYQDLSVQTQILKLLPELESFNIGKISNLIYNNDLAREKLQNFIYPLLIDKLILFKKENANSKFGFAEIPLLYEAKFDKYFDFVVTIYCSEEIRMQRAITRTSFDIEIYNKIKEIQLSQESKIAKADFAINSGVDMLDLEKQIEKLILVIARKL</sequence>
<organism>
    <name type="scientific">Rickettsia felis (strain ATCC VR-1525 / URRWXCal2)</name>
    <name type="common">Rickettsia azadi</name>
    <dbReference type="NCBI Taxonomy" id="315456"/>
    <lineage>
        <taxon>Bacteria</taxon>
        <taxon>Pseudomonadati</taxon>
        <taxon>Pseudomonadota</taxon>
        <taxon>Alphaproteobacteria</taxon>
        <taxon>Rickettsiales</taxon>
        <taxon>Rickettsiaceae</taxon>
        <taxon>Rickettsieae</taxon>
        <taxon>Rickettsia</taxon>
        <taxon>spotted fever group</taxon>
    </lineage>
</organism>
<evidence type="ECO:0000255" key="1">
    <source>
        <dbReference type="HAMAP-Rule" id="MF_00376"/>
    </source>
</evidence>
<evidence type="ECO:0007829" key="2">
    <source>
        <dbReference type="PDB" id="8DV0"/>
    </source>
</evidence>
<proteinExistence type="evidence at protein level"/>
<protein>
    <recommendedName>
        <fullName evidence="1">Dephospho-CoA kinase</fullName>
        <ecNumber evidence="1">2.7.1.24</ecNumber>
    </recommendedName>
    <alternativeName>
        <fullName evidence="1">Dephosphocoenzyme A kinase</fullName>
    </alternativeName>
</protein>
<comment type="function">
    <text evidence="1">Catalyzes the phosphorylation of the 3'-hydroxyl group of dephosphocoenzyme A to form coenzyme A.</text>
</comment>
<comment type="catalytic activity">
    <reaction evidence="1">
        <text>3'-dephospho-CoA + ATP = ADP + CoA + H(+)</text>
        <dbReference type="Rhea" id="RHEA:18245"/>
        <dbReference type="ChEBI" id="CHEBI:15378"/>
        <dbReference type="ChEBI" id="CHEBI:30616"/>
        <dbReference type="ChEBI" id="CHEBI:57287"/>
        <dbReference type="ChEBI" id="CHEBI:57328"/>
        <dbReference type="ChEBI" id="CHEBI:456216"/>
        <dbReference type="EC" id="2.7.1.24"/>
    </reaction>
</comment>
<comment type="pathway">
    <text evidence="1">Cofactor biosynthesis; coenzyme A biosynthesis; CoA from (R)-pantothenate: step 5/5.</text>
</comment>
<comment type="subcellular location">
    <subcellularLocation>
        <location evidence="1">Cytoplasm</location>
    </subcellularLocation>
</comment>
<comment type="similarity">
    <text evidence="1">Belongs to the CoaE family.</text>
</comment>
<keyword id="KW-0002">3D-structure</keyword>
<keyword id="KW-0067">ATP-binding</keyword>
<keyword id="KW-0173">Coenzyme A biosynthesis</keyword>
<keyword id="KW-0963">Cytoplasm</keyword>
<keyword id="KW-0418">Kinase</keyword>
<keyword id="KW-0547">Nucleotide-binding</keyword>
<keyword id="KW-0808">Transferase</keyword>